<name>MYOZ3_MOUSE</name>
<accession>Q8R4E4</accession>
<comment type="function">
    <text>Myozenins may serve as intracellular binding proteins involved in linking Z line proteins such as alpha-actinin, gamma-filamin, TCAP/telethonin, LDB3/ZASP and localizing calcineurin signaling to the sarcomere. Plays an important role in the modulation of calcineurin signaling. May play a role in myofibrillogenesis.</text>
</comment>
<comment type="subunit">
    <text evidence="1">Interacts with ACTN2, LDB3, FLNC, PPP3CA and TCAP.</text>
</comment>
<comment type="subcellular location">
    <subcellularLocation>
        <location evidence="3">Cytoplasm</location>
        <location evidence="3">Myofibril</location>
        <location evidence="3">Sarcomere</location>
        <location evidence="3">Z line</location>
    </subcellularLocation>
    <text>Localized at the Z-line of skeletal muscle.</text>
</comment>
<comment type="tissue specificity">
    <text evidence="3">Expressed specifically in skeletal muscle and is enriched in fast-twitch muscle fibers. Not detected in heart.</text>
</comment>
<comment type="similarity">
    <text evidence="4">Belongs to the myozenin family.</text>
</comment>
<dbReference type="EMBL" id="AF480442">
    <property type="protein sequence ID" value="AAL79335.1"/>
    <property type="molecule type" value="mRNA"/>
</dbReference>
<dbReference type="EMBL" id="BC104046">
    <property type="protein sequence ID" value="AAI04047.1"/>
    <property type="molecule type" value="mRNA"/>
</dbReference>
<dbReference type="EMBL" id="BC104047">
    <property type="protein sequence ID" value="AAI04048.1"/>
    <property type="molecule type" value="mRNA"/>
</dbReference>
<dbReference type="CCDS" id="CCDS29273.1"/>
<dbReference type="RefSeq" id="NP_579941.2">
    <property type="nucleotide sequence ID" value="NM_133363.3"/>
</dbReference>
<dbReference type="SMR" id="Q8R4E4"/>
<dbReference type="FunCoup" id="Q8R4E4">
    <property type="interactions" value="59"/>
</dbReference>
<dbReference type="STRING" id="10090.ENSMUSP00000063108"/>
<dbReference type="iPTMnet" id="Q8R4E4"/>
<dbReference type="PhosphoSitePlus" id="Q8R4E4"/>
<dbReference type="jPOST" id="Q8R4E4"/>
<dbReference type="PaxDb" id="10090-ENSMUSP00000063108"/>
<dbReference type="ProteomicsDB" id="287340"/>
<dbReference type="DNASU" id="170947"/>
<dbReference type="GeneID" id="170947"/>
<dbReference type="KEGG" id="mmu:170947"/>
<dbReference type="AGR" id="MGI:2179296"/>
<dbReference type="CTD" id="91977"/>
<dbReference type="MGI" id="MGI:2179296">
    <property type="gene designation" value="Myoz3"/>
</dbReference>
<dbReference type="eggNOG" id="ENOG502S22C">
    <property type="taxonomic scope" value="Eukaryota"/>
</dbReference>
<dbReference type="InParanoid" id="Q8R4E4"/>
<dbReference type="OrthoDB" id="9887337at2759"/>
<dbReference type="PhylomeDB" id="Q8R4E4"/>
<dbReference type="BioGRID-ORCS" id="170947">
    <property type="hits" value="0 hits in 76 CRISPR screens"/>
</dbReference>
<dbReference type="ChiTaRS" id="Myoz3">
    <property type="organism name" value="mouse"/>
</dbReference>
<dbReference type="PRO" id="PR:Q8R4E4"/>
<dbReference type="Proteomes" id="UP000000589">
    <property type="component" value="Unplaced"/>
</dbReference>
<dbReference type="RNAct" id="Q8R4E4">
    <property type="molecule type" value="protein"/>
</dbReference>
<dbReference type="GO" id="GO:0030018">
    <property type="term" value="C:Z disc"/>
    <property type="evidence" value="ECO:0000314"/>
    <property type="project" value="MGI"/>
</dbReference>
<dbReference type="InterPro" id="IPR008438">
    <property type="entry name" value="MYOZ"/>
</dbReference>
<dbReference type="PANTHER" id="PTHR15941">
    <property type="entry name" value="MYOZENIN"/>
    <property type="match status" value="1"/>
</dbReference>
<dbReference type="PANTHER" id="PTHR15941:SF15">
    <property type="entry name" value="MYOZENIN-3"/>
    <property type="match status" value="1"/>
</dbReference>
<dbReference type="Pfam" id="PF05556">
    <property type="entry name" value="Calsarcin"/>
    <property type="match status" value="1"/>
</dbReference>
<gene>
    <name evidence="7" type="primary">Myoz3</name>
</gene>
<organism>
    <name type="scientific">Mus musculus</name>
    <name type="common">Mouse</name>
    <dbReference type="NCBI Taxonomy" id="10090"/>
    <lineage>
        <taxon>Eukaryota</taxon>
        <taxon>Metazoa</taxon>
        <taxon>Chordata</taxon>
        <taxon>Craniata</taxon>
        <taxon>Vertebrata</taxon>
        <taxon>Euteleostomi</taxon>
        <taxon>Mammalia</taxon>
        <taxon>Eutheria</taxon>
        <taxon>Euarchontoglires</taxon>
        <taxon>Glires</taxon>
        <taxon>Rodentia</taxon>
        <taxon>Myomorpha</taxon>
        <taxon>Muroidea</taxon>
        <taxon>Muridae</taxon>
        <taxon>Murinae</taxon>
        <taxon>Mus</taxon>
        <taxon>Mus</taxon>
    </lineage>
</organism>
<reference evidence="4 6" key="1">
    <citation type="journal article" date="2002" name="J. Biol. Chem.">
        <title>Calsarcin-3, a novel skeletal muscle-specific member of the calsarcin family, interacts with multiple Z-disc proteins.</title>
        <authorList>
            <person name="Frey N."/>
            <person name="Olson E.N."/>
        </authorList>
    </citation>
    <scope>NUCLEOTIDE SEQUENCE [MRNA]</scope>
    <scope>SUBCELLULAR LOCATION</scope>
    <scope>TISSUE SPECIFICITY</scope>
    <source>
        <strain evidence="6">BALB/cJ</strain>
        <tissue evidence="6">Skeletal muscle</tissue>
    </source>
</reference>
<reference evidence="5" key="2">
    <citation type="journal article" date="2004" name="Genome Res.">
        <title>The status, quality, and expansion of the NIH full-length cDNA project: the Mammalian Gene Collection (MGC).</title>
        <authorList>
            <consortium name="The MGC Project Team"/>
        </authorList>
    </citation>
    <scope>NUCLEOTIDE SEQUENCE [LARGE SCALE MRNA]</scope>
</reference>
<reference key="3">
    <citation type="journal article" date="2010" name="Cell">
        <title>A tissue-specific atlas of mouse protein phosphorylation and expression.</title>
        <authorList>
            <person name="Huttlin E.L."/>
            <person name="Jedrychowski M.P."/>
            <person name="Elias J.E."/>
            <person name="Goswami T."/>
            <person name="Rad R."/>
            <person name="Beausoleil S.A."/>
            <person name="Villen J."/>
            <person name="Haas W."/>
            <person name="Sowa M.E."/>
            <person name="Gygi S.P."/>
        </authorList>
    </citation>
    <scope>PHOSPHORYLATION [LARGE SCALE ANALYSIS] AT SER-31</scope>
    <scope>IDENTIFICATION BY MASS SPECTROMETRY [LARGE SCALE ANALYSIS]</scope>
    <source>
        <tissue>Brown adipose tissue</tissue>
        <tissue>Lung</tissue>
    </source>
</reference>
<evidence type="ECO:0000250" key="1">
    <source>
        <dbReference type="UniProtKB" id="Q8TDC0"/>
    </source>
</evidence>
<evidence type="ECO:0000256" key="2">
    <source>
        <dbReference type="SAM" id="MobiDB-lite"/>
    </source>
</evidence>
<evidence type="ECO:0000269" key="3">
    <source>
    </source>
</evidence>
<evidence type="ECO:0000305" key="4"/>
<evidence type="ECO:0000312" key="5">
    <source>
        <dbReference type="EMBL" id="AAI04047.1"/>
    </source>
</evidence>
<evidence type="ECO:0000312" key="6">
    <source>
        <dbReference type="EMBL" id="AAL79335.1"/>
    </source>
</evidence>
<evidence type="ECO:0000312" key="7">
    <source>
        <dbReference type="MGI" id="MGI:2179296"/>
    </source>
</evidence>
<evidence type="ECO:0007744" key="8">
    <source>
    </source>
</evidence>
<sequence length="245" mass="26982">MIPKEQKEPVMAVPGDLAEPVPSLDLGKKLSVPQDLMIEELSLRNNRGSLLFQKRQRRVQKFTFELSESLQAILASSARGKVAGRAAQATVPNGLEEQNHHSETHVFQGSPGDPGITHLGAAGTGSVRSPSALAPGYAEPLKGVPPEKFNHTAIPKGYRCPWQEFTSYQDYSSGSRSHTPIPRDYRNFNKTPVPFGGPHVREAIFHAGTPFVPESFSGLELLRLRPNFNRVAQGWVRKLPESEEL</sequence>
<keyword id="KW-0963">Cytoplasm</keyword>
<keyword id="KW-0597">Phosphoprotein</keyword>
<keyword id="KW-1185">Reference proteome</keyword>
<feature type="chain" id="PRO_0000111103" description="Myozenin-3">
    <location>
        <begin position="1"/>
        <end position="245"/>
    </location>
</feature>
<feature type="region of interest" description="Binding to ACTN2, PPP3CA and TCAP" evidence="1">
    <location>
        <begin position="50"/>
        <end position="67"/>
    </location>
</feature>
<feature type="region of interest" description="Binding to FLNC" evidence="1">
    <location>
        <begin position="67"/>
        <end position="108"/>
    </location>
</feature>
<feature type="region of interest" description="Disordered" evidence="2">
    <location>
        <begin position="93"/>
        <end position="134"/>
    </location>
</feature>
<feature type="region of interest" description="Binding to ACTN2" evidence="1">
    <location>
        <begin position="180"/>
        <end position="201"/>
    </location>
</feature>
<feature type="modified residue" description="Phosphoserine" evidence="8">
    <location>
        <position position="31"/>
    </location>
</feature>
<proteinExistence type="evidence at protein level"/>
<protein>
    <recommendedName>
        <fullName>Myozenin-3</fullName>
    </recommendedName>
    <alternativeName>
        <fullName>Calsarcin-3</fullName>
    </alternativeName>
    <alternativeName>
        <fullName>FATZ-related protein 3</fullName>
    </alternativeName>
</protein>